<accession>P47606</accession>
<keyword id="KW-1185">Reference proteome</keyword>
<dbReference type="EMBL" id="L43967">
    <property type="protein sequence ID" value="AAC71593.1"/>
    <property type="molecule type" value="Genomic_DNA"/>
</dbReference>
<dbReference type="PIR" id="E64240">
    <property type="entry name" value="E64240"/>
</dbReference>
<dbReference type="RefSeq" id="WP_010869451.1">
    <property type="nucleotide sequence ID" value="NC_000908.2"/>
</dbReference>
<dbReference type="STRING" id="243273.MG_366"/>
<dbReference type="GeneID" id="88282549"/>
<dbReference type="KEGG" id="mge:MG_366"/>
<dbReference type="eggNOG" id="COG2251">
    <property type="taxonomic scope" value="Bacteria"/>
</dbReference>
<dbReference type="HOGENOM" id="CLU_402679_0_0_14"/>
<dbReference type="InParanoid" id="P47606"/>
<dbReference type="OrthoDB" id="9783873at2"/>
<dbReference type="BioCyc" id="MGEN243273:G1GJ2-460-MONOMER"/>
<dbReference type="Proteomes" id="UP000000807">
    <property type="component" value="Chromosome"/>
</dbReference>
<dbReference type="InterPro" id="IPR021301">
    <property type="entry name" value="DUF2779"/>
</dbReference>
<dbReference type="NCBIfam" id="NF045869">
    <property type="entry name" value="UU173_fam"/>
    <property type="match status" value="1"/>
</dbReference>
<dbReference type="Pfam" id="PF11074">
    <property type="entry name" value="DUF2779"/>
    <property type="match status" value="1"/>
</dbReference>
<reference key="1">
    <citation type="journal article" date="1995" name="Science">
        <title>The minimal gene complement of Mycoplasma genitalium.</title>
        <authorList>
            <person name="Fraser C.M."/>
            <person name="Gocayne J.D."/>
            <person name="White O."/>
            <person name="Adams M.D."/>
            <person name="Clayton R.A."/>
            <person name="Fleischmann R.D."/>
            <person name="Bult C.J."/>
            <person name="Kerlavage A.R."/>
            <person name="Sutton G.G."/>
            <person name="Kelley J.M."/>
            <person name="Fritchman J.L."/>
            <person name="Weidman J.F."/>
            <person name="Small K.V."/>
            <person name="Sandusky M."/>
            <person name="Fuhrmann J.L."/>
            <person name="Nguyen D.T."/>
            <person name="Utterback T.R."/>
            <person name="Saudek D.M."/>
            <person name="Phillips C.A."/>
            <person name="Merrick J.M."/>
            <person name="Tomb J.-F."/>
            <person name="Dougherty B.A."/>
            <person name="Bott K.F."/>
            <person name="Hu P.-C."/>
            <person name="Lucier T.S."/>
            <person name="Peterson S.N."/>
            <person name="Smith H.O."/>
            <person name="Hutchison C.A. III"/>
            <person name="Venter J.C."/>
        </authorList>
    </citation>
    <scope>NUCLEOTIDE SEQUENCE [LARGE SCALE GENOMIC DNA]</scope>
    <source>
        <strain>ATCC 33530 / DSM 19775 / NCTC 10195 / G37</strain>
    </source>
</reference>
<name>Y366_MYCGE</name>
<organism>
    <name type="scientific">Mycoplasma genitalium (strain ATCC 33530 / DSM 19775 / NCTC 10195 / G37)</name>
    <name type="common">Mycoplasmoides genitalium</name>
    <dbReference type="NCBI Taxonomy" id="243273"/>
    <lineage>
        <taxon>Bacteria</taxon>
        <taxon>Bacillati</taxon>
        <taxon>Mycoplasmatota</taxon>
        <taxon>Mycoplasmoidales</taxon>
        <taxon>Mycoplasmoidaceae</taxon>
        <taxon>Mycoplasmoides</taxon>
    </lineage>
</organism>
<proteinExistence type="predicted"/>
<protein>
    <recommendedName>
        <fullName>Uncharacterized protein MG366</fullName>
    </recommendedName>
</protein>
<sequence>MITKSFFLKNFDRSKELIPLSYNDVFSAVNQFLKSYTDVNDIDIIEENLIEDPVFELDVLELLNEDPMLLLDSKNPRVQEAKIIANKAKKNIKDYFNLPIFFDTDSLDKNVSVYQKAELTEKKIQEIITSKKSAIIFKPIFEIEDCLIQPDAIIVHEKGLCEFVVIKATTNTKRKYFLEIIYDFVLFKKIGKYKLLNYYFCTVKYELQNKNNVSFFLNTEIKTSKNSFSLSSKEKDYFKNKPFNHPEKIAYIHKKKSNGVNGFLIVKLIDNLIKNNIVDLNKISDFVTKEIDSKSVRNIQPLIKNAAKIQINFWDQIQDIKKYQELKINQIVFNYSENFDSFWSNYLLRNLIKLVFAHKYNEIFKLSGKLANWSQLTYAYKENKSITINQLLHELNQKKSKANFNNSTNKISFFLEAWNSEKGFAIGNKFKNTWNKLKKKKVYFDFETISSSIRIINNSLPFSQIVTQCSLIVDKNEIDDKRKLNCENLIFDPLFISVNDFKKVIDSLYQNNCSDYSFVVFNKSFEKNRLLEMATLINEQIYKEKVKAIVDNLFDLADIFTIENNCLAFKQLNGFSSIKKVLTIIDESFLKASKSIGYQNLKIQKGDVAQEVALSRFLNCLNKNEWNQVAFELKKYCENDVRAMISIVLFIQDLIKKNDLFTFYSEN</sequence>
<gene>
    <name type="ordered locus">MG366</name>
</gene>
<feature type="chain" id="PRO_0000210567" description="Uncharacterized protein MG366">
    <location>
        <begin position="1"/>
        <end position="667"/>
    </location>
</feature>